<organism>
    <name type="scientific">Prochlorococcus marinus (strain MIT 9312)</name>
    <dbReference type="NCBI Taxonomy" id="74546"/>
    <lineage>
        <taxon>Bacteria</taxon>
        <taxon>Bacillati</taxon>
        <taxon>Cyanobacteriota</taxon>
        <taxon>Cyanophyceae</taxon>
        <taxon>Synechococcales</taxon>
        <taxon>Prochlorococcaceae</taxon>
        <taxon>Prochlorococcus</taxon>
    </lineage>
</organism>
<protein>
    <recommendedName>
        <fullName evidence="1">Cysteine--tRNA ligase</fullName>
        <ecNumber evidence="1">6.1.1.16</ecNumber>
    </recommendedName>
    <alternativeName>
        <fullName evidence="1">Cysteinyl-tRNA synthetase</fullName>
        <shortName evidence="1">CysRS</shortName>
    </alternativeName>
</protein>
<accession>Q319Z9</accession>
<comment type="catalytic activity">
    <reaction evidence="1">
        <text>tRNA(Cys) + L-cysteine + ATP = L-cysteinyl-tRNA(Cys) + AMP + diphosphate</text>
        <dbReference type="Rhea" id="RHEA:17773"/>
        <dbReference type="Rhea" id="RHEA-COMP:9661"/>
        <dbReference type="Rhea" id="RHEA-COMP:9679"/>
        <dbReference type="ChEBI" id="CHEBI:30616"/>
        <dbReference type="ChEBI" id="CHEBI:33019"/>
        <dbReference type="ChEBI" id="CHEBI:35235"/>
        <dbReference type="ChEBI" id="CHEBI:78442"/>
        <dbReference type="ChEBI" id="CHEBI:78517"/>
        <dbReference type="ChEBI" id="CHEBI:456215"/>
        <dbReference type="EC" id="6.1.1.16"/>
    </reaction>
</comment>
<comment type="cofactor">
    <cofactor evidence="1">
        <name>Zn(2+)</name>
        <dbReference type="ChEBI" id="CHEBI:29105"/>
    </cofactor>
    <text evidence="1">Binds 1 zinc ion per subunit.</text>
</comment>
<comment type="subunit">
    <text evidence="1">Monomer.</text>
</comment>
<comment type="subcellular location">
    <subcellularLocation>
        <location evidence="1">Cytoplasm</location>
    </subcellularLocation>
</comment>
<comment type="similarity">
    <text evidence="1">Belongs to the class-I aminoacyl-tRNA synthetase family.</text>
</comment>
<evidence type="ECO:0000255" key="1">
    <source>
        <dbReference type="HAMAP-Rule" id="MF_00041"/>
    </source>
</evidence>
<feature type="chain" id="PRO_0000240933" description="Cysteine--tRNA ligase">
    <location>
        <begin position="1"/>
        <end position="489"/>
    </location>
</feature>
<feature type="short sequence motif" description="'HIGH' region">
    <location>
        <begin position="29"/>
        <end position="39"/>
    </location>
</feature>
<feature type="short sequence motif" description="'KMSKS' region">
    <location>
        <begin position="268"/>
        <end position="272"/>
    </location>
</feature>
<feature type="binding site" evidence="1">
    <location>
        <position position="27"/>
    </location>
    <ligand>
        <name>Zn(2+)</name>
        <dbReference type="ChEBI" id="CHEBI:29105"/>
    </ligand>
</feature>
<feature type="binding site" evidence="1">
    <location>
        <position position="211"/>
    </location>
    <ligand>
        <name>Zn(2+)</name>
        <dbReference type="ChEBI" id="CHEBI:29105"/>
    </ligand>
</feature>
<feature type="binding site" evidence="1">
    <location>
        <position position="236"/>
    </location>
    <ligand>
        <name>Zn(2+)</name>
        <dbReference type="ChEBI" id="CHEBI:29105"/>
    </ligand>
</feature>
<feature type="binding site" evidence="1">
    <location>
        <position position="240"/>
    </location>
    <ligand>
        <name>Zn(2+)</name>
        <dbReference type="ChEBI" id="CHEBI:29105"/>
    </ligand>
</feature>
<feature type="binding site" evidence="1">
    <location>
        <position position="271"/>
    </location>
    <ligand>
        <name>ATP</name>
        <dbReference type="ChEBI" id="CHEBI:30616"/>
    </ligand>
</feature>
<name>SYC_PROM9</name>
<gene>
    <name evidence="1" type="primary">cysS</name>
    <name type="ordered locus">PMT9312_1237</name>
</gene>
<sequence length="489" mass="56600">MIKLFNTLSKRVEVFKPIDDVVKIYCCGVTVYDLCHLGHARSYIAWDVLRRFLIYSDFKVKYVQNFTDIDDKILKRAKEESSSMKEVSEKNIIEFHKDMDSLGIMRPDSMPRATNHICNICSFITILEDKGYAYSRDGDVYYSVFKNKNYGKLSNQNIQEQNINKQGRMANEENNKKQNPQDFALWKKAKNDEPFFDSPWGRGRPGWHIECSAMVKDELGDTIDIHLGGSDLIFPHHENEIAQSEAANGKKLANYWLHNGMVNVNGQKMSKSLKNFKTIRELIKSGISPMTLRYFVMTVNYRKPLDFTEEALRSAAEAWKNINLALSFMDLTKGAFRSIDKNESIEEEYKEKLSFELSQKKLKFSEALGNDLNTAGAIAIIYDLAKPLKNFLNQFQRIEGLKIDLNEKFFLLENFKTLEKLTEVLGLKKEVLVKERKITEEEISSLINERLKAKKGKNYAKADEIRNLLKEKGIELIDQSKEITTWIRV</sequence>
<keyword id="KW-0030">Aminoacyl-tRNA synthetase</keyword>
<keyword id="KW-0067">ATP-binding</keyword>
<keyword id="KW-0963">Cytoplasm</keyword>
<keyword id="KW-0436">Ligase</keyword>
<keyword id="KW-0479">Metal-binding</keyword>
<keyword id="KW-0547">Nucleotide-binding</keyword>
<keyword id="KW-0648">Protein biosynthesis</keyword>
<keyword id="KW-0862">Zinc</keyword>
<dbReference type="EC" id="6.1.1.16" evidence="1"/>
<dbReference type="EMBL" id="CP000111">
    <property type="protein sequence ID" value="ABB50296.1"/>
    <property type="molecule type" value="Genomic_DNA"/>
</dbReference>
<dbReference type="RefSeq" id="WP_011376786.1">
    <property type="nucleotide sequence ID" value="NC_007577.1"/>
</dbReference>
<dbReference type="SMR" id="Q319Z9"/>
<dbReference type="STRING" id="74546.PMT9312_1237"/>
<dbReference type="KEGG" id="pmi:PMT9312_1237"/>
<dbReference type="eggNOG" id="COG0215">
    <property type="taxonomic scope" value="Bacteria"/>
</dbReference>
<dbReference type="HOGENOM" id="CLU_013528_0_1_3"/>
<dbReference type="OrthoDB" id="9815130at2"/>
<dbReference type="Proteomes" id="UP000002715">
    <property type="component" value="Chromosome"/>
</dbReference>
<dbReference type="GO" id="GO:0005829">
    <property type="term" value="C:cytosol"/>
    <property type="evidence" value="ECO:0007669"/>
    <property type="project" value="TreeGrafter"/>
</dbReference>
<dbReference type="GO" id="GO:0005524">
    <property type="term" value="F:ATP binding"/>
    <property type="evidence" value="ECO:0007669"/>
    <property type="project" value="UniProtKB-UniRule"/>
</dbReference>
<dbReference type="GO" id="GO:0004817">
    <property type="term" value="F:cysteine-tRNA ligase activity"/>
    <property type="evidence" value="ECO:0007669"/>
    <property type="project" value="UniProtKB-UniRule"/>
</dbReference>
<dbReference type="GO" id="GO:0008270">
    <property type="term" value="F:zinc ion binding"/>
    <property type="evidence" value="ECO:0007669"/>
    <property type="project" value="UniProtKB-UniRule"/>
</dbReference>
<dbReference type="GO" id="GO:0006423">
    <property type="term" value="P:cysteinyl-tRNA aminoacylation"/>
    <property type="evidence" value="ECO:0007669"/>
    <property type="project" value="UniProtKB-UniRule"/>
</dbReference>
<dbReference type="CDD" id="cd00672">
    <property type="entry name" value="CysRS_core"/>
    <property type="match status" value="1"/>
</dbReference>
<dbReference type="FunFam" id="3.40.50.620:FF:000009">
    <property type="entry name" value="Cysteine--tRNA ligase"/>
    <property type="match status" value="1"/>
</dbReference>
<dbReference type="Gene3D" id="1.20.120.1910">
    <property type="entry name" value="Cysteine-tRNA ligase, C-terminal anti-codon recognition domain"/>
    <property type="match status" value="1"/>
</dbReference>
<dbReference type="Gene3D" id="3.40.50.620">
    <property type="entry name" value="HUPs"/>
    <property type="match status" value="1"/>
</dbReference>
<dbReference type="HAMAP" id="MF_00041">
    <property type="entry name" value="Cys_tRNA_synth"/>
    <property type="match status" value="1"/>
</dbReference>
<dbReference type="InterPro" id="IPR015803">
    <property type="entry name" value="Cys-tRNA-ligase"/>
</dbReference>
<dbReference type="InterPro" id="IPR015273">
    <property type="entry name" value="Cys-tRNA-synt_Ia_DALR"/>
</dbReference>
<dbReference type="InterPro" id="IPR024909">
    <property type="entry name" value="Cys-tRNA/MSH_ligase"/>
</dbReference>
<dbReference type="InterPro" id="IPR014729">
    <property type="entry name" value="Rossmann-like_a/b/a_fold"/>
</dbReference>
<dbReference type="InterPro" id="IPR032678">
    <property type="entry name" value="tRNA-synt_1_cat_dom"/>
</dbReference>
<dbReference type="InterPro" id="IPR009080">
    <property type="entry name" value="tRNAsynth_Ia_anticodon-bd"/>
</dbReference>
<dbReference type="NCBIfam" id="TIGR00435">
    <property type="entry name" value="cysS"/>
    <property type="match status" value="1"/>
</dbReference>
<dbReference type="PANTHER" id="PTHR10890:SF3">
    <property type="entry name" value="CYSTEINE--TRNA LIGASE, CYTOPLASMIC"/>
    <property type="match status" value="1"/>
</dbReference>
<dbReference type="PANTHER" id="PTHR10890">
    <property type="entry name" value="CYSTEINYL-TRNA SYNTHETASE"/>
    <property type="match status" value="1"/>
</dbReference>
<dbReference type="Pfam" id="PF09190">
    <property type="entry name" value="DALR_2"/>
    <property type="match status" value="1"/>
</dbReference>
<dbReference type="Pfam" id="PF01406">
    <property type="entry name" value="tRNA-synt_1e"/>
    <property type="match status" value="1"/>
</dbReference>
<dbReference type="PRINTS" id="PR00983">
    <property type="entry name" value="TRNASYNTHCYS"/>
</dbReference>
<dbReference type="SMART" id="SM00840">
    <property type="entry name" value="DALR_2"/>
    <property type="match status" value="1"/>
</dbReference>
<dbReference type="SUPFAM" id="SSF47323">
    <property type="entry name" value="Anticodon-binding domain of a subclass of class I aminoacyl-tRNA synthetases"/>
    <property type="match status" value="1"/>
</dbReference>
<dbReference type="SUPFAM" id="SSF52374">
    <property type="entry name" value="Nucleotidylyl transferase"/>
    <property type="match status" value="1"/>
</dbReference>
<reference key="1">
    <citation type="journal article" date="2006" name="Science">
        <title>Genomic islands and the ecology and evolution of Prochlorococcus.</title>
        <authorList>
            <person name="Coleman M.L."/>
            <person name="Sullivan M.B."/>
            <person name="Martiny A.C."/>
            <person name="Steglich C."/>
            <person name="Barry K."/>
            <person name="Delong E.F."/>
            <person name="Chisholm S.W."/>
        </authorList>
    </citation>
    <scope>NUCLEOTIDE SEQUENCE [LARGE SCALE GENOMIC DNA]</scope>
    <source>
        <strain>MIT 9312</strain>
    </source>
</reference>
<proteinExistence type="inferred from homology"/>